<reference key="1">
    <citation type="online journal article" date="1997" name="Plant Gene Register">
        <title>Molecular cloning of two cDNAs encoding S-adenosyl-L-methionine decarboxylase in mustard (Brassica juncea [L.] Czern &amp; Coss).</title>
        <authorList>
            <person name="Lee T."/>
            <person name="Liu J.-J."/>
            <person name="Pua E.-C."/>
        </authorList>
        <locator>PGR97-157</locator>
    </citation>
    <scope>NUCLEOTIDE SEQUENCE [MRNA]</scope>
</reference>
<evidence type="ECO:0000250" key="1"/>
<evidence type="ECO:0000305" key="2"/>
<keyword id="KW-0068">Autocatalytic cleavage</keyword>
<keyword id="KW-0210">Decarboxylase</keyword>
<keyword id="KW-0456">Lyase</keyword>
<keyword id="KW-0620">Polyamine biosynthesis</keyword>
<keyword id="KW-0670">Pyruvate</keyword>
<keyword id="KW-0949">S-adenosyl-L-methionine</keyword>
<keyword id="KW-0704">Schiff base</keyword>
<keyword id="KW-0745">Spermidine biosynthesis</keyword>
<keyword id="KW-0865">Zymogen</keyword>
<dbReference type="EC" id="4.1.1.50"/>
<dbReference type="EMBL" id="X95729">
    <property type="protein sequence ID" value="CAA65044.1"/>
    <property type="molecule type" value="mRNA"/>
</dbReference>
<dbReference type="SMR" id="Q42613"/>
<dbReference type="BRENDA" id="4.1.1.50">
    <property type="organism ID" value="941"/>
</dbReference>
<dbReference type="UniPathway" id="UPA00331">
    <property type="reaction ID" value="UER00451"/>
</dbReference>
<dbReference type="GO" id="GO:0005829">
    <property type="term" value="C:cytosol"/>
    <property type="evidence" value="ECO:0007669"/>
    <property type="project" value="TreeGrafter"/>
</dbReference>
<dbReference type="GO" id="GO:0004014">
    <property type="term" value="F:adenosylmethionine decarboxylase activity"/>
    <property type="evidence" value="ECO:0007669"/>
    <property type="project" value="UniProtKB-EC"/>
</dbReference>
<dbReference type="GO" id="GO:0008295">
    <property type="term" value="P:spermidine biosynthetic process"/>
    <property type="evidence" value="ECO:0007669"/>
    <property type="project" value="UniProtKB-KW"/>
</dbReference>
<dbReference type="GO" id="GO:0006597">
    <property type="term" value="P:spermine biosynthetic process"/>
    <property type="evidence" value="ECO:0007669"/>
    <property type="project" value="InterPro"/>
</dbReference>
<dbReference type="FunFam" id="3.30.360.50:FF:000001">
    <property type="entry name" value="S-adenosylmethionine decarboxylase proenzyme"/>
    <property type="match status" value="1"/>
</dbReference>
<dbReference type="FunFam" id="3.60.90.10:FF:000002">
    <property type="entry name" value="S-adenosylmethionine decarboxylase proenzyme"/>
    <property type="match status" value="1"/>
</dbReference>
<dbReference type="Gene3D" id="3.30.360.50">
    <property type="entry name" value="S-adenosylmethionine decarboxylase"/>
    <property type="match status" value="1"/>
</dbReference>
<dbReference type="Gene3D" id="3.60.90.10">
    <property type="entry name" value="S-adenosylmethionine decarboxylase"/>
    <property type="match status" value="1"/>
</dbReference>
<dbReference type="InterPro" id="IPR048283">
    <property type="entry name" value="AdoMetDC-like"/>
</dbReference>
<dbReference type="InterPro" id="IPR001985">
    <property type="entry name" value="S-AdoMet_decarboxylase_euk"/>
</dbReference>
<dbReference type="InterPro" id="IPR016067">
    <property type="entry name" value="S-AdoMet_deCO2ase_core"/>
</dbReference>
<dbReference type="InterPro" id="IPR018166">
    <property type="entry name" value="S-AdoMet_deCO2ase_CS"/>
</dbReference>
<dbReference type="NCBIfam" id="TIGR00535">
    <property type="entry name" value="SAM_DCase"/>
    <property type="match status" value="1"/>
</dbReference>
<dbReference type="PANTHER" id="PTHR11570">
    <property type="entry name" value="S-ADENOSYLMETHIONINE DECARBOXYLASE"/>
    <property type="match status" value="1"/>
</dbReference>
<dbReference type="PANTHER" id="PTHR11570:SF32">
    <property type="entry name" value="S-ADENOSYLMETHIONINE DECARBOXYLASE PROENZYME 2"/>
    <property type="match status" value="1"/>
</dbReference>
<dbReference type="Pfam" id="PF01536">
    <property type="entry name" value="SAM_decarbox"/>
    <property type="match status" value="1"/>
</dbReference>
<dbReference type="PIRSF" id="PIRSF001355">
    <property type="entry name" value="S-AdenosylMet_decarboxylase"/>
    <property type="match status" value="1"/>
</dbReference>
<dbReference type="SUPFAM" id="SSF56276">
    <property type="entry name" value="S-adenosylmethionine decarboxylase"/>
    <property type="match status" value="1"/>
</dbReference>
<dbReference type="PROSITE" id="PS01336">
    <property type="entry name" value="ADOMETDC"/>
    <property type="match status" value="1"/>
</dbReference>
<sequence>MSLSAIGFEGLRERLEVSFFEPSLFLDTHGKGLRALSKSQIDEILAPAECTIVSSLSNDELDSYVLSESSLFIFPYKIIIKTCGTTKLLLSIEPLLRLAGGVSLEVKSVRYTRGSFLCPGGQPFPQRNLSEEVSVLDGHFAKMGLSSVAYLMGDDDETKKWHVYSASAPAKNSNGDNNVYTLEMCMSGLDKDKASVFFKNESSSAGSMTDNSGIRKILPQSQICDFEFEPCGYSMNSVEGDASSTIHVTPEDGFSYASFEAVGYDFTTMDLSQLVSRVLTCFEPKQFSVAVHSSVAQKSYDHSGLSVDLEDYGCRETTVGVSRRRERNSDVSEVREAGNVLWFSEIDLKCEWSSNSSCTSEDEKEEGI</sequence>
<gene>
    <name type="primary">SAMDC1</name>
</gene>
<organism>
    <name type="scientific">Brassica juncea</name>
    <name type="common">Indian mustard</name>
    <name type="synonym">Sinapis juncea</name>
    <dbReference type="NCBI Taxonomy" id="3707"/>
    <lineage>
        <taxon>Eukaryota</taxon>
        <taxon>Viridiplantae</taxon>
        <taxon>Streptophyta</taxon>
        <taxon>Embryophyta</taxon>
        <taxon>Tracheophyta</taxon>
        <taxon>Spermatophyta</taxon>
        <taxon>Magnoliopsida</taxon>
        <taxon>eudicotyledons</taxon>
        <taxon>Gunneridae</taxon>
        <taxon>Pentapetalae</taxon>
        <taxon>rosids</taxon>
        <taxon>malvids</taxon>
        <taxon>Brassicales</taxon>
        <taxon>Brassicaceae</taxon>
        <taxon>Brassiceae</taxon>
        <taxon>Brassica</taxon>
    </lineage>
</organism>
<name>DCAM1_BRAJU</name>
<comment type="catalytic activity">
    <reaction>
        <text>S-adenosyl-L-methionine + H(+) = S-adenosyl 3-(methylsulfanyl)propylamine + CO2</text>
        <dbReference type="Rhea" id="RHEA:15981"/>
        <dbReference type="ChEBI" id="CHEBI:15378"/>
        <dbReference type="ChEBI" id="CHEBI:16526"/>
        <dbReference type="ChEBI" id="CHEBI:57443"/>
        <dbReference type="ChEBI" id="CHEBI:59789"/>
        <dbReference type="EC" id="4.1.1.50"/>
    </reaction>
</comment>
<comment type="cofactor">
    <cofactor evidence="1">
        <name>pyruvate</name>
        <dbReference type="ChEBI" id="CHEBI:15361"/>
    </cofactor>
    <text evidence="1">Binds 1 pyruvoyl group covalently per subunit.</text>
</comment>
<comment type="pathway">
    <text>Amine and polyamine biosynthesis; S-adenosylmethioninamine biosynthesis; S-adenosylmethioninamine from S-adenosyl-L-methionine: step 1/1.</text>
</comment>
<comment type="PTM">
    <text evidence="1">Is synthesized initially as an inactive proenzyme. Formation of the active enzyme involves a self-maturation process in which the active site pyruvoyl group is generated from an internal serine residue via an autocatalytic post-translational modification. Two non-identical subunits are generated from the proenzyme in this reaction, and the pyruvate is formed at the N-terminus of the alpha chain, which is derived from the carboxyl end of the proenzyme. The post-translation cleavage follows an unusual pathway, termed non-hydrolytic serinolysis, in which the side chain hydroxyl group of the serine supplies its oxygen atom to form the C-terminus of the beta chain, while the remainder of the serine residue undergoes an oxidative deamination to produce ammonia and the pyruvoyl group blocking the N-terminus of the alpha chain (By similarity).</text>
</comment>
<comment type="similarity">
    <text evidence="2">Belongs to the eukaryotic AdoMetDC family.</text>
</comment>
<accession>Q42613</accession>
<proteinExistence type="evidence at transcript level"/>
<feature type="chain" id="PRO_0000029991" description="S-adenosylmethionine decarboxylase 1 beta chain" evidence="1">
    <location>
        <begin position="1"/>
        <end position="68"/>
    </location>
</feature>
<feature type="chain" id="PRO_0000029992" description="S-adenosylmethionine decarboxylase 1 alpha chain" evidence="1">
    <location>
        <begin position="69"/>
        <end position="368"/>
    </location>
</feature>
<feature type="active site" evidence="1">
    <location>
        <position position="9"/>
    </location>
</feature>
<feature type="active site" evidence="1">
    <location>
        <position position="12"/>
    </location>
</feature>
<feature type="active site" description="Schiff-base intermediate with substrate; via pyruvic acid" evidence="1">
    <location>
        <position position="69"/>
    </location>
</feature>
<feature type="active site" description="Proton donor; for catalytic activity" evidence="1">
    <location>
        <position position="83"/>
    </location>
</feature>
<feature type="active site" description="Proton acceptor; for processing activity" evidence="1">
    <location>
        <position position="234"/>
    </location>
</feature>
<feature type="active site" description="Proton acceptor; for processing activity" evidence="1">
    <location>
        <position position="247"/>
    </location>
</feature>
<feature type="site" description="Cleavage (non-hydrolytic); by autolysis" evidence="1">
    <location>
        <begin position="68"/>
        <end position="69"/>
    </location>
</feature>
<feature type="modified residue" description="Pyruvic acid (Ser); by autocatalysis" evidence="1">
    <location>
        <position position="69"/>
    </location>
</feature>
<protein>
    <recommendedName>
        <fullName>S-adenosylmethionine decarboxylase proenzyme 1</fullName>
        <shortName>AdoMetDC 1</shortName>
        <shortName>SAMDC 1</shortName>
        <ecNumber>4.1.1.50</ecNumber>
    </recommendedName>
    <component>
        <recommendedName>
            <fullName>S-adenosylmethionine decarboxylase 1 alpha chain</fullName>
        </recommendedName>
    </component>
    <component>
        <recommendedName>
            <fullName>S-adenosylmethionine decarboxylase 1 beta chain</fullName>
        </recommendedName>
    </component>
</protein>